<feature type="signal peptide" evidence="2">
    <location>
        <begin position="1"/>
        <end position="27"/>
    </location>
</feature>
<feature type="chain" id="PRO_0000004442" description="Cocaine- and amphetamine-regulated transcript protein">
    <location>
        <begin position="28"/>
        <end position="129"/>
    </location>
</feature>
<feature type="peptide" id="PRO_0000004443" description="CART(1-52)">
    <location>
        <begin position="28"/>
        <end position="79"/>
    </location>
</feature>
<feature type="peptide" id="PRO_0000004444" description="CART(55-102)">
    <location>
        <begin position="82"/>
        <end position="129"/>
    </location>
</feature>
<feature type="peptide" id="PRO_0000004445" description="CART(62-102)" evidence="2">
    <location>
        <begin position="89"/>
        <end position="129"/>
    </location>
</feature>
<feature type="modified residue" description="Phosphotyrosine" evidence="6">
    <location>
        <position position="41"/>
    </location>
</feature>
<feature type="modified residue" description="Phosphoserine" evidence="6">
    <location>
        <position position="48"/>
    </location>
</feature>
<feature type="disulfide bond" evidence="3">
    <location>
        <begin position="95"/>
        <end position="113"/>
    </location>
</feature>
<feature type="disulfide bond" evidence="3">
    <location>
        <begin position="101"/>
        <end position="121"/>
    </location>
</feature>
<feature type="disulfide bond" evidence="3">
    <location>
        <begin position="115"/>
        <end position="128"/>
    </location>
</feature>
<feature type="splice variant" id="VSP_000794" description="In isoform Short." evidence="4">
    <location>
        <begin position="54"/>
        <end position="66"/>
    </location>
</feature>
<feature type="modified residue" description="Phosphoserine" evidence="6">
    <location sequence="P49192-2">
        <position position="48"/>
    </location>
</feature>
<reference key="1">
    <citation type="journal article" date="1995" name="J. Neurosci.">
        <title>PCR differential display identifies a rat brain mRNA that is transcriptionally regulated by cocaine and amphetamine.</title>
        <authorList>
            <person name="Douglass J.O."/>
            <person name="McKinzie A.A."/>
            <person name="Couceyro P."/>
        </authorList>
    </citation>
    <scope>NUCLEOTIDE SEQUENCE [MRNA] (ISOFORMS LONG AND SHORT)</scope>
    <source>
        <strain>Sprague-Dawley</strain>
        <tissue>Brain</tissue>
    </source>
</reference>
<reference key="2">
    <citation type="journal article" date="1998" name="FEBS Lett.">
        <title>Purification and characterisation of a new hypothalamic satiety peptide, cocaine and amphetamine regulated transcript (CART), produced in yeast.</title>
        <authorList>
            <person name="Thim L."/>
            <person name="Nielsen P.F."/>
            <person name="Judge M.E."/>
            <person name="Andersen A.S."/>
            <person name="Diers I."/>
            <person name="Egel-Mitani M."/>
            <person name="Hastrup S."/>
        </authorList>
    </citation>
    <scope>PROTEIN SEQUENCE OF 81-97</scope>
    <scope>IDENTIFICATION BY MASS SPECTROMETRY</scope>
    <scope>DISULFIDE BONDS</scope>
</reference>
<reference key="3">
    <citation type="journal article" date="2012" name="Nat. Commun.">
        <title>Quantitative maps of protein phosphorylation sites across 14 different rat organs and tissues.</title>
        <authorList>
            <person name="Lundby A."/>
            <person name="Secher A."/>
            <person name="Lage K."/>
            <person name="Nordsborg N.B."/>
            <person name="Dmytriyev A."/>
            <person name="Lundby C."/>
            <person name="Olsen J.V."/>
        </authorList>
    </citation>
    <scope>PHOSPHORYLATION [LARGE SCALE ANALYSIS] AT TYR-41 AND SER-48</scope>
    <scope>PHOSPHORYLATION [LARGE SCALE ANALYSIS] AT SER-48 (ISOFORM SHORT)</scope>
    <scope>IDENTIFICATION BY MASS SPECTROMETRY [LARGE SCALE ANALYSIS]</scope>
</reference>
<protein>
    <recommendedName>
        <fullName>Cocaine- and amphetamine-regulated transcript protein</fullName>
    </recommendedName>
    <component>
        <recommendedName>
            <fullName>CART(1-52)</fullName>
        </recommendedName>
    </component>
    <component>
        <recommendedName>
            <fullName>CART(55-102)</fullName>
        </recommendedName>
    </component>
    <component>
        <recommendedName>
            <fullName>CART(62-102)</fullName>
        </recommendedName>
    </component>
</protein>
<sequence>MESSRLRLLPVLGAALLLLLPLLGAGAQEDAELQPRALDIYSAVDDASHEKELPRRQLRAPGAVLQIEALQEVLKKLKSKRIPIYEKKYGQVPMCDAGEQCAVRKGARIGKLCDCPRGTSCNSFLLKCL</sequence>
<organism>
    <name type="scientific">Rattus norvegicus</name>
    <name type="common">Rat</name>
    <dbReference type="NCBI Taxonomy" id="10116"/>
    <lineage>
        <taxon>Eukaryota</taxon>
        <taxon>Metazoa</taxon>
        <taxon>Chordata</taxon>
        <taxon>Craniata</taxon>
        <taxon>Vertebrata</taxon>
        <taxon>Euteleostomi</taxon>
        <taxon>Mammalia</taxon>
        <taxon>Eutheria</taxon>
        <taxon>Euarchontoglires</taxon>
        <taxon>Glires</taxon>
        <taxon>Rodentia</taxon>
        <taxon>Myomorpha</taxon>
        <taxon>Muroidea</taxon>
        <taxon>Muridae</taxon>
        <taxon>Murinae</taxon>
        <taxon>Rattus</taxon>
    </lineage>
</organism>
<comment type="function">
    <text evidence="1">Satiety factor closely associated with the actions of leptin and neuropeptide y; this anorectic peptide inhibits both normal and starvation-induced feeding and completely blocks the feeding response induced by neuropeptide Y and regulated by leptin in the hypothalamus.</text>
</comment>
<comment type="subcellular location">
    <subcellularLocation>
        <location evidence="5">Secreted</location>
    </subcellularLocation>
</comment>
<comment type="alternative products">
    <event type="alternative splicing"/>
    <isoform>
        <id>P49192-1</id>
        <name>Long</name>
        <sequence type="displayed"/>
    </isoform>
    <isoform>
        <id>P49192-2</id>
        <name>Short</name>
        <sequence type="described" ref="VSP_000794"/>
    </isoform>
</comment>
<comment type="tissue specificity">
    <text>Neuroendocrine tissues. Predominantly expressed in the hypothalamus, pituitary, and longitudinal muscle-myenteric plexus. Abundant expression is also seen in the midbrain/thalamus and eye. A lower level expression is seen in the other brain regions and adrenal.</text>
</comment>
<comment type="induction">
    <text>By cocaine and amphetamine.</text>
</comment>
<comment type="similarity">
    <text evidence="5">Belongs to the CART family.</text>
</comment>
<keyword id="KW-0025">Alternative splicing</keyword>
<keyword id="KW-0165">Cleavage on pair of basic residues</keyword>
<keyword id="KW-0903">Direct protein sequencing</keyword>
<keyword id="KW-1015">Disulfide bond</keyword>
<keyword id="KW-0527">Neuropeptide</keyword>
<keyword id="KW-0529">Neurotransmitter</keyword>
<keyword id="KW-0597">Phosphoprotein</keyword>
<keyword id="KW-1185">Reference proteome</keyword>
<keyword id="KW-0964">Secreted</keyword>
<keyword id="KW-0732">Signal</keyword>
<gene>
    <name type="primary">Cartpt</name>
    <name type="synonym">Cart</name>
</gene>
<proteinExistence type="evidence at protein level"/>
<accession>P49192</accession>
<evidence type="ECO:0000250" key="1"/>
<evidence type="ECO:0000255" key="2"/>
<evidence type="ECO:0000269" key="3">
    <source>
    </source>
</evidence>
<evidence type="ECO:0000303" key="4">
    <source>
    </source>
</evidence>
<evidence type="ECO:0000305" key="5"/>
<evidence type="ECO:0007744" key="6">
    <source>
    </source>
</evidence>
<name>CART_RAT</name>
<dbReference type="EMBL" id="U10071">
    <property type="protein sequence ID" value="AAA87897.1"/>
    <property type="molecule type" value="mRNA"/>
</dbReference>
<dbReference type="RefSeq" id="NP_058806.1">
    <molecule id="P49192-1"/>
    <property type="nucleotide sequence ID" value="NM_017110.1"/>
</dbReference>
<dbReference type="RefSeq" id="XP_006231905.1">
    <molecule id="P49192-2"/>
    <property type="nucleotide sequence ID" value="XM_006231843.5"/>
</dbReference>
<dbReference type="SMR" id="P49192"/>
<dbReference type="FunCoup" id="P49192">
    <property type="interactions" value="85"/>
</dbReference>
<dbReference type="STRING" id="10116.ENSRNOP00000023869"/>
<dbReference type="iPTMnet" id="P49192"/>
<dbReference type="PhosphoSitePlus" id="P49192"/>
<dbReference type="PaxDb" id="10116-ENSRNOP00000023869"/>
<dbReference type="Ensembl" id="ENSRNOT00000023869.3">
    <molecule id="P49192-2"/>
    <property type="protein sequence ID" value="ENSRNOP00000023869.2"/>
    <property type="gene ID" value="ENSRNOG00000017712.3"/>
</dbReference>
<dbReference type="GeneID" id="29131"/>
<dbReference type="KEGG" id="rno:29131"/>
<dbReference type="UCSC" id="RGD:2272">
    <molecule id="P49192-1"/>
    <property type="organism name" value="rat"/>
</dbReference>
<dbReference type="AGR" id="RGD:2272"/>
<dbReference type="CTD" id="9607"/>
<dbReference type="RGD" id="2272">
    <property type="gene designation" value="Cartpt"/>
</dbReference>
<dbReference type="VEuPathDB" id="HostDB:ENSRNOG00000017712"/>
<dbReference type="eggNOG" id="ENOG502S2YU">
    <property type="taxonomic scope" value="Eukaryota"/>
</dbReference>
<dbReference type="GeneTree" id="ENSGT00390000018319"/>
<dbReference type="HOGENOM" id="CLU_157363_1_0_1"/>
<dbReference type="InParanoid" id="P49192"/>
<dbReference type="OMA" id="RIYEKKY"/>
<dbReference type="OrthoDB" id="67204at9989"/>
<dbReference type="PhylomeDB" id="P49192"/>
<dbReference type="TreeFam" id="TF332948"/>
<dbReference type="PRO" id="PR:P49192"/>
<dbReference type="Proteomes" id="UP000002494">
    <property type="component" value="Chromosome 2"/>
</dbReference>
<dbReference type="Bgee" id="ENSRNOG00000017712">
    <property type="expression patterns" value="Expressed in duodenum and 10 other cell types or tissues"/>
</dbReference>
<dbReference type="GO" id="GO:0005615">
    <property type="term" value="C:extracellular space"/>
    <property type="evidence" value="ECO:0000314"/>
    <property type="project" value="HGNC-UCL"/>
</dbReference>
<dbReference type="GO" id="GO:0030141">
    <property type="term" value="C:secretory granule"/>
    <property type="evidence" value="ECO:0000266"/>
    <property type="project" value="RGD"/>
</dbReference>
<dbReference type="GO" id="GO:0045202">
    <property type="term" value="C:synapse"/>
    <property type="evidence" value="ECO:0007669"/>
    <property type="project" value="GOC"/>
</dbReference>
<dbReference type="GO" id="GO:0005184">
    <property type="term" value="F:neuropeptide hormone activity"/>
    <property type="evidence" value="ECO:0007669"/>
    <property type="project" value="InterPro"/>
</dbReference>
<dbReference type="GO" id="GO:0008343">
    <property type="term" value="P:adult feeding behavior"/>
    <property type="evidence" value="ECO:0000314"/>
    <property type="project" value="HGNC-UCL"/>
</dbReference>
<dbReference type="GO" id="GO:0009267">
    <property type="term" value="P:cellular response to starvation"/>
    <property type="evidence" value="ECO:0000314"/>
    <property type="project" value="HGNC-UCL"/>
</dbReference>
<dbReference type="GO" id="GO:0007268">
    <property type="term" value="P:chemical synaptic transmission"/>
    <property type="evidence" value="ECO:0007669"/>
    <property type="project" value="UniProtKB-KW"/>
</dbReference>
<dbReference type="GO" id="GO:0032922">
    <property type="term" value="P:circadian regulation of gene expression"/>
    <property type="evidence" value="ECO:0000314"/>
    <property type="project" value="HGNC-UCL"/>
</dbReference>
<dbReference type="GO" id="GO:0007186">
    <property type="term" value="P:G protein-coupled receptor signaling pathway"/>
    <property type="evidence" value="ECO:0000314"/>
    <property type="project" value="HGNC-UCL"/>
</dbReference>
<dbReference type="GO" id="GO:0001696">
    <property type="term" value="P:gastric acid secretion"/>
    <property type="evidence" value="ECO:0000304"/>
    <property type="project" value="RGD"/>
</dbReference>
<dbReference type="GO" id="GO:0001678">
    <property type="term" value="P:intracellular glucose homeostasis"/>
    <property type="evidence" value="ECO:0000250"/>
    <property type="project" value="HGNC-UCL"/>
</dbReference>
<dbReference type="GO" id="GO:0032099">
    <property type="term" value="P:negative regulation of appetite"/>
    <property type="evidence" value="ECO:0000314"/>
    <property type="project" value="HGNC-UCL"/>
</dbReference>
<dbReference type="GO" id="GO:0045779">
    <property type="term" value="P:negative regulation of bone resorption"/>
    <property type="evidence" value="ECO:0000266"/>
    <property type="project" value="RGD"/>
</dbReference>
<dbReference type="GO" id="GO:0070093">
    <property type="term" value="P:negative regulation of glucagon secretion"/>
    <property type="evidence" value="ECO:0000314"/>
    <property type="project" value="RGD"/>
</dbReference>
<dbReference type="GO" id="GO:0007218">
    <property type="term" value="P:neuropeptide signaling pathway"/>
    <property type="evidence" value="ECO:0007669"/>
    <property type="project" value="UniProtKB-KW"/>
</dbReference>
<dbReference type="GO" id="GO:0045777">
    <property type="term" value="P:positive regulation of blood pressure"/>
    <property type="evidence" value="ECO:0000250"/>
    <property type="project" value="HGNC-UCL"/>
</dbReference>
<dbReference type="GO" id="GO:0032812">
    <property type="term" value="P:positive regulation of epinephrine secretion"/>
    <property type="evidence" value="ECO:0000250"/>
    <property type="project" value="HGNC-UCL"/>
</dbReference>
<dbReference type="GO" id="GO:0043410">
    <property type="term" value="P:positive regulation of MAPK cascade"/>
    <property type="evidence" value="ECO:0000314"/>
    <property type="project" value="HGNC-UCL"/>
</dbReference>
<dbReference type="GO" id="GO:0051971">
    <property type="term" value="P:positive regulation of transmission of nerve impulse"/>
    <property type="evidence" value="ECO:0000250"/>
    <property type="project" value="HGNC-UCL"/>
</dbReference>
<dbReference type="GO" id="GO:0046850">
    <property type="term" value="P:regulation of bone remodeling"/>
    <property type="evidence" value="ECO:0000266"/>
    <property type="project" value="RGD"/>
</dbReference>
<dbReference type="GO" id="GO:0050796">
    <property type="term" value="P:regulation of insulin secretion"/>
    <property type="evidence" value="ECO:0000314"/>
    <property type="project" value="RGD"/>
</dbReference>
<dbReference type="GO" id="GO:0043278">
    <property type="term" value="P:response to morphine"/>
    <property type="evidence" value="ECO:0000270"/>
    <property type="project" value="RGD"/>
</dbReference>
<dbReference type="GO" id="GO:0070253">
    <property type="term" value="P:somatostatin secretion"/>
    <property type="evidence" value="ECO:0000314"/>
    <property type="project" value="RGD"/>
</dbReference>
<dbReference type="CDD" id="cd22741">
    <property type="entry name" value="CART_CTD-like"/>
    <property type="match status" value="1"/>
</dbReference>
<dbReference type="FunFam" id="4.10.40.30:FF:000001">
    <property type="entry name" value="Cocaine-and amphetamine-regulated transcript protein"/>
    <property type="match status" value="1"/>
</dbReference>
<dbReference type="Gene3D" id="4.10.40.30">
    <property type="entry name" value="CART, C-terminal domain"/>
    <property type="match status" value="1"/>
</dbReference>
<dbReference type="InterPro" id="IPR009106">
    <property type="entry name" value="CART"/>
</dbReference>
<dbReference type="InterPro" id="IPR036722">
    <property type="entry name" value="CART_C_sf"/>
</dbReference>
<dbReference type="PANTHER" id="PTHR16655">
    <property type="entry name" value="COCAINE AND AMPHETAMINE REGULATED TRANSCRIPT PROTEIN"/>
    <property type="match status" value="1"/>
</dbReference>
<dbReference type="PANTHER" id="PTHR16655:SF0">
    <property type="entry name" value="COCAINE- AND AMPHETAMINE-REGULATED TRANSCRIPT PROTEIN"/>
    <property type="match status" value="1"/>
</dbReference>
<dbReference type="Pfam" id="PF06373">
    <property type="entry name" value="CART"/>
    <property type="match status" value="1"/>
</dbReference>
<dbReference type="SUPFAM" id="SSF64546">
    <property type="entry name" value="Satiety factor CART (cocaine and amphetamine regulated transcript)"/>
    <property type="match status" value="1"/>
</dbReference>